<gene>
    <name evidence="1" type="primary">rplI</name>
    <name type="ordered locus">Sde_1059</name>
</gene>
<sequence>MEVILLEKVGKLGTVGDVVDVKAGFGRNYLLPSGKAITATKASIADFETRRAELEAAAAEKKTSAEGRAKLIDNLGAITIGANAGDEGKLFGSVGARDIANAITAAGVNVTKAEVKLPEGTLREVGEYEIDLQLHVDVTHVVKVVIVADANA</sequence>
<name>RL9_SACD2</name>
<reference key="1">
    <citation type="journal article" date="2008" name="PLoS Genet.">
        <title>Complete genome sequence of the complex carbohydrate-degrading marine bacterium, Saccharophagus degradans strain 2-40 T.</title>
        <authorList>
            <person name="Weiner R.M."/>
            <person name="Taylor L.E. II"/>
            <person name="Henrissat B."/>
            <person name="Hauser L."/>
            <person name="Land M."/>
            <person name="Coutinho P.M."/>
            <person name="Rancurel C."/>
            <person name="Saunders E.H."/>
            <person name="Longmire A.G."/>
            <person name="Zhang H."/>
            <person name="Bayer E.A."/>
            <person name="Gilbert H.J."/>
            <person name="Larimer F."/>
            <person name="Zhulin I.B."/>
            <person name="Ekborg N.A."/>
            <person name="Lamed R."/>
            <person name="Richardson P.M."/>
            <person name="Borovok I."/>
            <person name="Hutcheson S."/>
        </authorList>
    </citation>
    <scope>NUCLEOTIDE SEQUENCE [LARGE SCALE GENOMIC DNA]</scope>
    <source>
        <strain>2-40 / ATCC 43961 / DSM 17024</strain>
    </source>
</reference>
<evidence type="ECO:0000255" key="1">
    <source>
        <dbReference type="HAMAP-Rule" id="MF_00503"/>
    </source>
</evidence>
<evidence type="ECO:0000305" key="2"/>
<dbReference type="EMBL" id="CP000282">
    <property type="protein sequence ID" value="ABD80321.1"/>
    <property type="molecule type" value="Genomic_DNA"/>
</dbReference>
<dbReference type="RefSeq" id="WP_011467541.1">
    <property type="nucleotide sequence ID" value="NC_007912.1"/>
</dbReference>
<dbReference type="SMR" id="Q21LV8"/>
<dbReference type="STRING" id="203122.Sde_1059"/>
<dbReference type="GeneID" id="98612739"/>
<dbReference type="KEGG" id="sde:Sde_1059"/>
<dbReference type="eggNOG" id="COG0359">
    <property type="taxonomic scope" value="Bacteria"/>
</dbReference>
<dbReference type="HOGENOM" id="CLU_078938_4_1_6"/>
<dbReference type="OrthoDB" id="9788336at2"/>
<dbReference type="Proteomes" id="UP000001947">
    <property type="component" value="Chromosome"/>
</dbReference>
<dbReference type="GO" id="GO:1990904">
    <property type="term" value="C:ribonucleoprotein complex"/>
    <property type="evidence" value="ECO:0007669"/>
    <property type="project" value="UniProtKB-KW"/>
</dbReference>
<dbReference type="GO" id="GO:0005840">
    <property type="term" value="C:ribosome"/>
    <property type="evidence" value="ECO:0007669"/>
    <property type="project" value="UniProtKB-KW"/>
</dbReference>
<dbReference type="GO" id="GO:0019843">
    <property type="term" value="F:rRNA binding"/>
    <property type="evidence" value="ECO:0007669"/>
    <property type="project" value="UniProtKB-UniRule"/>
</dbReference>
<dbReference type="GO" id="GO:0003735">
    <property type="term" value="F:structural constituent of ribosome"/>
    <property type="evidence" value="ECO:0007669"/>
    <property type="project" value="InterPro"/>
</dbReference>
<dbReference type="GO" id="GO:0006412">
    <property type="term" value="P:translation"/>
    <property type="evidence" value="ECO:0007669"/>
    <property type="project" value="UniProtKB-UniRule"/>
</dbReference>
<dbReference type="Gene3D" id="3.10.430.100">
    <property type="entry name" value="Ribosomal protein L9, C-terminal domain"/>
    <property type="match status" value="1"/>
</dbReference>
<dbReference type="Gene3D" id="3.40.5.10">
    <property type="entry name" value="Ribosomal protein L9, N-terminal domain"/>
    <property type="match status" value="1"/>
</dbReference>
<dbReference type="HAMAP" id="MF_00503">
    <property type="entry name" value="Ribosomal_bL9"/>
    <property type="match status" value="1"/>
</dbReference>
<dbReference type="InterPro" id="IPR000244">
    <property type="entry name" value="Ribosomal_bL9"/>
</dbReference>
<dbReference type="InterPro" id="IPR009027">
    <property type="entry name" value="Ribosomal_bL9/RNase_H1_N"/>
</dbReference>
<dbReference type="InterPro" id="IPR020594">
    <property type="entry name" value="Ribosomal_bL9_bac/chp"/>
</dbReference>
<dbReference type="InterPro" id="IPR020069">
    <property type="entry name" value="Ribosomal_bL9_C"/>
</dbReference>
<dbReference type="InterPro" id="IPR036791">
    <property type="entry name" value="Ribosomal_bL9_C_sf"/>
</dbReference>
<dbReference type="InterPro" id="IPR020070">
    <property type="entry name" value="Ribosomal_bL9_N"/>
</dbReference>
<dbReference type="InterPro" id="IPR036935">
    <property type="entry name" value="Ribosomal_bL9_N_sf"/>
</dbReference>
<dbReference type="NCBIfam" id="TIGR00158">
    <property type="entry name" value="L9"/>
    <property type="match status" value="1"/>
</dbReference>
<dbReference type="PANTHER" id="PTHR21368">
    <property type="entry name" value="50S RIBOSOMAL PROTEIN L9"/>
    <property type="match status" value="1"/>
</dbReference>
<dbReference type="Pfam" id="PF03948">
    <property type="entry name" value="Ribosomal_L9_C"/>
    <property type="match status" value="1"/>
</dbReference>
<dbReference type="Pfam" id="PF01281">
    <property type="entry name" value="Ribosomal_L9_N"/>
    <property type="match status" value="1"/>
</dbReference>
<dbReference type="SUPFAM" id="SSF55658">
    <property type="entry name" value="L9 N-domain-like"/>
    <property type="match status" value="1"/>
</dbReference>
<dbReference type="SUPFAM" id="SSF55653">
    <property type="entry name" value="Ribosomal protein L9 C-domain"/>
    <property type="match status" value="1"/>
</dbReference>
<dbReference type="PROSITE" id="PS00651">
    <property type="entry name" value="RIBOSOMAL_L9"/>
    <property type="match status" value="1"/>
</dbReference>
<accession>Q21LV8</accession>
<protein>
    <recommendedName>
        <fullName evidence="1">Large ribosomal subunit protein bL9</fullName>
    </recommendedName>
    <alternativeName>
        <fullName evidence="2">50S ribosomal protein L9</fullName>
    </alternativeName>
</protein>
<keyword id="KW-1185">Reference proteome</keyword>
<keyword id="KW-0687">Ribonucleoprotein</keyword>
<keyword id="KW-0689">Ribosomal protein</keyword>
<keyword id="KW-0694">RNA-binding</keyword>
<keyword id="KW-0699">rRNA-binding</keyword>
<proteinExistence type="inferred from homology"/>
<comment type="function">
    <text evidence="1">Binds to the 23S rRNA.</text>
</comment>
<comment type="similarity">
    <text evidence="1">Belongs to the bacterial ribosomal protein bL9 family.</text>
</comment>
<feature type="chain" id="PRO_0000258488" description="Large ribosomal subunit protein bL9">
    <location>
        <begin position="1"/>
        <end position="152"/>
    </location>
</feature>
<organism>
    <name type="scientific">Saccharophagus degradans (strain 2-40 / ATCC 43961 / DSM 17024)</name>
    <dbReference type="NCBI Taxonomy" id="203122"/>
    <lineage>
        <taxon>Bacteria</taxon>
        <taxon>Pseudomonadati</taxon>
        <taxon>Pseudomonadota</taxon>
        <taxon>Gammaproteobacteria</taxon>
        <taxon>Cellvibrionales</taxon>
        <taxon>Cellvibrionaceae</taxon>
        <taxon>Saccharophagus</taxon>
    </lineage>
</organism>